<accession>P97433</accession>
<accession>A0PJC1</accession>
<accession>B2RQQ2</accession>
<accession>G5E8P2</accession>
<accession>Q69Z41</accession>
<accession>Q6DI55</accession>
<organism>
    <name type="scientific">Mus musculus</name>
    <name type="common">Mouse</name>
    <dbReference type="NCBI Taxonomy" id="10090"/>
    <lineage>
        <taxon>Eukaryota</taxon>
        <taxon>Metazoa</taxon>
        <taxon>Chordata</taxon>
        <taxon>Craniata</taxon>
        <taxon>Vertebrata</taxon>
        <taxon>Euteleostomi</taxon>
        <taxon>Mammalia</taxon>
        <taxon>Eutheria</taxon>
        <taxon>Euarchontoglires</taxon>
        <taxon>Glires</taxon>
        <taxon>Rodentia</taxon>
        <taxon>Myomorpha</taxon>
        <taxon>Muroidea</taxon>
        <taxon>Muridae</taxon>
        <taxon>Murinae</taxon>
        <taxon>Mus</taxon>
        <taxon>Mus</taxon>
    </lineage>
</organism>
<gene>
    <name type="primary">Arhgef28</name>
    <name type="synonym">Kiaa1998</name>
    <name type="synonym">Rgnef</name>
    <name type="synonym">Rhoip2</name>
    <name type="synonym">Rip2</name>
</gene>
<name>ARG28_MOUSE</name>
<evidence type="ECO:0000250" key="1"/>
<evidence type="ECO:0000250" key="2">
    <source>
        <dbReference type="UniProtKB" id="P0C6P5"/>
    </source>
</evidence>
<evidence type="ECO:0000250" key="3">
    <source>
        <dbReference type="UniProtKB" id="Q8N1W1"/>
    </source>
</evidence>
<evidence type="ECO:0000255" key="4"/>
<evidence type="ECO:0000255" key="5">
    <source>
        <dbReference type="PROSITE-ProRule" id="PRU00062"/>
    </source>
</evidence>
<evidence type="ECO:0000255" key="6">
    <source>
        <dbReference type="PROSITE-ProRule" id="PRU00145"/>
    </source>
</evidence>
<evidence type="ECO:0000255" key="7">
    <source>
        <dbReference type="PROSITE-ProRule" id="PRU00226"/>
    </source>
</evidence>
<evidence type="ECO:0000256" key="8">
    <source>
        <dbReference type="SAM" id="MobiDB-lite"/>
    </source>
</evidence>
<evidence type="ECO:0000269" key="9">
    <source>
    </source>
</evidence>
<evidence type="ECO:0000269" key="10">
    <source>
    </source>
</evidence>
<evidence type="ECO:0000269" key="11">
    <source>
    </source>
</evidence>
<evidence type="ECO:0000269" key="12">
    <source>
    </source>
</evidence>
<evidence type="ECO:0000269" key="13">
    <source>
    </source>
</evidence>
<evidence type="ECO:0000269" key="14">
    <source>
    </source>
</evidence>
<evidence type="ECO:0000269" key="15">
    <source>
    </source>
</evidence>
<evidence type="ECO:0000269" key="16">
    <source>
    </source>
</evidence>
<evidence type="ECO:0000269" key="17">
    <source>
    </source>
</evidence>
<evidence type="ECO:0000269" key="18">
    <source>
    </source>
</evidence>
<evidence type="ECO:0000269" key="19">
    <source>
    </source>
</evidence>
<evidence type="ECO:0000269" key="20">
    <source>
    </source>
</evidence>
<evidence type="ECO:0000303" key="21">
    <source>
    </source>
</evidence>
<evidence type="ECO:0000305" key="22"/>
<evidence type="ECO:0000312" key="23">
    <source>
        <dbReference type="Proteomes" id="UP000000589"/>
    </source>
</evidence>
<evidence type="ECO:0007744" key="24">
    <source>
    </source>
</evidence>
<feature type="chain" id="PRO_0000080967" description="Rho guanine nucleotide exchange factor 28">
    <location>
        <begin position="1"/>
        <end position="1700"/>
    </location>
</feature>
<feature type="domain" description="DH" evidence="5">
    <location>
        <begin position="846"/>
        <end position="1041"/>
    </location>
</feature>
<feature type="domain" description="PH" evidence="6">
    <location>
        <begin position="1095"/>
        <end position="1184"/>
    </location>
</feature>
<feature type="zinc finger region" description="Phorbol-ester/DAG-type" evidence="7">
    <location>
        <begin position="651"/>
        <end position="698"/>
    </location>
</feature>
<feature type="region of interest" description="Disordered" evidence="8">
    <location>
        <begin position="288"/>
        <end position="343"/>
    </location>
</feature>
<feature type="region of interest" description="Disordered" evidence="8">
    <location>
        <begin position="483"/>
        <end position="532"/>
    </location>
</feature>
<feature type="region of interest" description="Disordered" evidence="8">
    <location>
        <begin position="1184"/>
        <end position="1205"/>
    </location>
</feature>
<feature type="region of interest" description="Disordered" evidence="8">
    <location>
        <begin position="1289"/>
        <end position="1328"/>
    </location>
</feature>
<feature type="region of interest" description="Interaction with PTK2/FAK1; required for regulation of axonal branching and synapse formation">
    <location>
        <begin position="1292"/>
        <end position="1301"/>
    </location>
</feature>
<feature type="region of interest" description="Mediates cytoplasmic retention and interaction with YWHAH" evidence="12">
    <location>
        <begin position="1369"/>
        <end position="1380"/>
    </location>
</feature>
<feature type="region of interest" description="Interaction with microtubules">
    <location>
        <begin position="1421"/>
        <end position="1700"/>
    </location>
</feature>
<feature type="region of interest" description="RNA-binding" evidence="1">
    <location>
        <begin position="1493"/>
        <end position="1524"/>
    </location>
</feature>
<feature type="region of interest" description="Mediates cytoplasmic retention and interaction with MAPK8IP1" evidence="9">
    <location>
        <begin position="1563"/>
        <end position="1576"/>
    </location>
</feature>
<feature type="region of interest" description="Disordered" evidence="8">
    <location>
        <begin position="1602"/>
        <end position="1700"/>
    </location>
</feature>
<feature type="coiled-coil region" evidence="4">
    <location>
        <begin position="1421"/>
        <end position="1522"/>
    </location>
</feature>
<feature type="compositionally biased region" description="Basic and acidic residues" evidence="8">
    <location>
        <begin position="330"/>
        <end position="343"/>
    </location>
</feature>
<feature type="compositionally biased region" description="Basic and acidic residues" evidence="8">
    <location>
        <begin position="1191"/>
        <end position="1205"/>
    </location>
</feature>
<feature type="compositionally biased region" description="Polar residues" evidence="8">
    <location>
        <begin position="1309"/>
        <end position="1325"/>
    </location>
</feature>
<feature type="compositionally biased region" description="Low complexity" evidence="8">
    <location>
        <begin position="1647"/>
        <end position="1663"/>
    </location>
</feature>
<feature type="compositionally biased region" description="Polar residues" evidence="8">
    <location>
        <begin position="1664"/>
        <end position="1675"/>
    </location>
</feature>
<feature type="modified residue" description="Phosphoserine" evidence="2">
    <location>
        <position position="312"/>
    </location>
</feature>
<feature type="modified residue" description="Phosphoserine" evidence="2">
    <location>
        <position position="314"/>
    </location>
</feature>
<feature type="modified residue" description="Phosphoserine" evidence="2">
    <location>
        <position position="478"/>
    </location>
</feature>
<feature type="modified residue" description="Phosphoserine" evidence="3">
    <location>
        <position position="623"/>
    </location>
</feature>
<feature type="modified residue" description="Phosphoserine" evidence="3">
    <location>
        <position position="1535"/>
    </location>
</feature>
<feature type="modified residue" description="Phosphoserine" evidence="24">
    <location>
        <position position="1604"/>
    </location>
</feature>
<feature type="splice variant" id="VSP_032145" description="In isoform 2." evidence="21">
    <original>SLV</original>
    <variation>CGI</variation>
    <location>
        <begin position="1322"/>
        <end position="1324"/>
    </location>
</feature>
<feature type="splice variant" id="VSP_032146" description="In isoform 2." evidence="21">
    <location>
        <begin position="1325"/>
        <end position="1700"/>
    </location>
</feature>
<feature type="mutagenesis site" description="Loss of function." evidence="10">
    <original>Y</original>
    <variation>A</variation>
    <location>
        <position position="1003"/>
    </location>
</feature>
<feature type="mutagenesis site" description="Alters interaction with YWHAH." evidence="12">
    <original>N</original>
    <variation>A</variation>
    <location>
        <position position="1375"/>
    </location>
</feature>
<feature type="mutagenesis site" description="Alters interaction with YWHAH." evidence="12">
    <original>L</original>
    <variation>A</variation>
    <location>
        <position position="1376"/>
    </location>
</feature>
<feature type="mutagenesis site" description="Alters interaction with MAPK8IP1." evidence="9">
    <original>F</original>
    <variation>A</variation>
    <location>
        <position position="1563"/>
    </location>
</feature>
<feature type="mutagenesis site" description="Alters interaction with MAPK8IP1." evidence="9">
    <original>N</original>
    <variation>A</variation>
    <location>
        <position position="1565"/>
    </location>
</feature>
<feature type="mutagenesis site" description="Alters interaction with MAPK8IP1." evidence="9">
    <original>F</original>
    <variation>A</variation>
    <location>
        <position position="1568"/>
    </location>
</feature>
<feature type="sequence conflict" description="In Ref. 1; AAB18197 and 4; AAI38031." evidence="22" ref="1 4">
    <original>P</original>
    <variation>A</variation>
    <location>
        <position position="340"/>
    </location>
</feature>
<feature type="sequence conflict" description="In Ref. 4; AAH75734." evidence="22" ref="4">
    <original>A</original>
    <variation>T</variation>
    <location>
        <position position="481"/>
    </location>
</feature>
<dbReference type="EMBL" id="U73199">
    <property type="protein sequence ID" value="AAB18197.1"/>
    <property type="status" value="ALT_FRAME"/>
    <property type="molecule type" value="mRNA"/>
</dbReference>
<dbReference type="EMBL" id="AK173325">
    <property type="protein sequence ID" value="BAD32603.1"/>
    <property type="status" value="ALT_INIT"/>
    <property type="molecule type" value="mRNA"/>
</dbReference>
<dbReference type="EMBL" id="BC022978">
    <property type="protein sequence ID" value="AAH22978.1"/>
    <property type="status" value="ALT_SEQ"/>
    <property type="molecule type" value="mRNA"/>
</dbReference>
<dbReference type="EMBL" id="BC075734">
    <property type="protein sequence ID" value="AAH75734.1"/>
    <property type="status" value="ALT_SEQ"/>
    <property type="molecule type" value="mRNA"/>
</dbReference>
<dbReference type="EMBL" id="BC138030">
    <property type="protein sequence ID" value="AAI38031.1"/>
    <property type="molecule type" value="mRNA"/>
</dbReference>
<dbReference type="CCDS" id="CCDS36758.1">
    <molecule id="P97433-1"/>
</dbReference>
<dbReference type="PIR" id="T30867">
    <property type="entry name" value="T30867"/>
</dbReference>
<dbReference type="RefSeq" id="NP_036156.2">
    <molecule id="P97433-1"/>
    <property type="nucleotide sequence ID" value="NM_012026.3"/>
</dbReference>
<dbReference type="SMR" id="P97433"/>
<dbReference type="BioGRID" id="225739">
    <property type="interactions" value="11"/>
</dbReference>
<dbReference type="CORUM" id="P97433"/>
<dbReference type="FunCoup" id="P97433">
    <property type="interactions" value="48"/>
</dbReference>
<dbReference type="IntAct" id="P97433">
    <property type="interactions" value="2"/>
</dbReference>
<dbReference type="MINT" id="P97433"/>
<dbReference type="STRING" id="10090.ENSMUSP00000105053"/>
<dbReference type="GlyGen" id="P97433">
    <property type="glycosylation" value="1 site"/>
</dbReference>
<dbReference type="iPTMnet" id="P97433"/>
<dbReference type="PhosphoSitePlus" id="P97433"/>
<dbReference type="PaxDb" id="10090-ENSMUSP00000105053"/>
<dbReference type="ProteomicsDB" id="283256">
    <molecule id="P97433-1"/>
</dbReference>
<dbReference type="ProteomicsDB" id="283257">
    <molecule id="P97433-2"/>
</dbReference>
<dbReference type="ProteomicsDB" id="343420"/>
<dbReference type="Pumba" id="P97433"/>
<dbReference type="Antibodypedia" id="48924">
    <property type="antibodies" value="25 antibodies from 11 providers"/>
</dbReference>
<dbReference type="DNASU" id="110596"/>
<dbReference type="Ensembl" id="ENSMUST00000109426.3">
    <molecule id="P97433-1"/>
    <property type="protein sequence ID" value="ENSMUSP00000105053.2"/>
    <property type="gene ID" value="ENSMUSG00000021662.12"/>
</dbReference>
<dbReference type="Ensembl" id="ENSMUST00000225884.2">
    <molecule id="P97433-2"/>
    <property type="protein sequence ID" value="ENSMUSP00000153423.2"/>
    <property type="gene ID" value="ENSMUSG00000021662.12"/>
</dbReference>
<dbReference type="GeneID" id="110596"/>
<dbReference type="KEGG" id="mmu:110596"/>
<dbReference type="UCSC" id="uc007rol.1">
    <molecule id="P97433-2"/>
    <property type="organism name" value="mouse"/>
</dbReference>
<dbReference type="AGR" id="MGI:1346016"/>
<dbReference type="CTD" id="64283"/>
<dbReference type="MGI" id="MGI:1346016">
    <property type="gene designation" value="Arhgef28"/>
</dbReference>
<dbReference type="VEuPathDB" id="HostDB:ENSMUSG00000021662"/>
<dbReference type="eggNOG" id="KOG3519">
    <property type="taxonomic scope" value="Eukaryota"/>
</dbReference>
<dbReference type="eggNOG" id="KOG3520">
    <property type="taxonomic scope" value="Eukaryota"/>
</dbReference>
<dbReference type="GeneTree" id="ENSGT00940000155831"/>
<dbReference type="HOGENOM" id="CLU_002466_2_1_1"/>
<dbReference type="InParanoid" id="P97433"/>
<dbReference type="OMA" id="SFCHENS"/>
<dbReference type="OrthoDB" id="28045at2759"/>
<dbReference type="PhylomeDB" id="P97433"/>
<dbReference type="TreeFam" id="TF334740"/>
<dbReference type="Reactome" id="R-MMU-3928662">
    <property type="pathway name" value="EPHB-mediated forward signaling"/>
</dbReference>
<dbReference type="Reactome" id="R-MMU-8980692">
    <property type="pathway name" value="RHOA GTPase cycle"/>
</dbReference>
<dbReference type="Reactome" id="R-MMU-9013026">
    <property type="pathway name" value="RHOB GTPase cycle"/>
</dbReference>
<dbReference type="Reactome" id="R-MMU-9013106">
    <property type="pathway name" value="RHOC GTPase cycle"/>
</dbReference>
<dbReference type="BioGRID-ORCS" id="110596">
    <property type="hits" value="0 hits in 76 CRISPR screens"/>
</dbReference>
<dbReference type="ChiTaRS" id="Arhgef28">
    <property type="organism name" value="mouse"/>
</dbReference>
<dbReference type="PRO" id="PR:P97433"/>
<dbReference type="Proteomes" id="UP000000589">
    <property type="component" value="Chromosome 13"/>
</dbReference>
<dbReference type="RNAct" id="P97433">
    <property type="molecule type" value="protein"/>
</dbReference>
<dbReference type="Bgee" id="ENSMUSG00000021662">
    <property type="expression patterns" value="Expressed in parotid gland and 218 other cell types or tissues"/>
</dbReference>
<dbReference type="GO" id="GO:0005737">
    <property type="term" value="C:cytoplasm"/>
    <property type="evidence" value="ECO:0007669"/>
    <property type="project" value="UniProtKB-SubCell"/>
</dbReference>
<dbReference type="GO" id="GO:0005886">
    <property type="term" value="C:plasma membrane"/>
    <property type="evidence" value="ECO:0007669"/>
    <property type="project" value="UniProtKB-SubCell"/>
</dbReference>
<dbReference type="GO" id="GO:0005085">
    <property type="term" value="F:guanyl-nucleotide exchange factor activity"/>
    <property type="evidence" value="ECO:0007669"/>
    <property type="project" value="UniProtKB-KW"/>
</dbReference>
<dbReference type="GO" id="GO:0003723">
    <property type="term" value="F:RNA binding"/>
    <property type="evidence" value="ECO:0007669"/>
    <property type="project" value="UniProtKB-KW"/>
</dbReference>
<dbReference type="GO" id="GO:0008270">
    <property type="term" value="F:zinc ion binding"/>
    <property type="evidence" value="ECO:0007669"/>
    <property type="project" value="UniProtKB-KW"/>
</dbReference>
<dbReference type="GO" id="GO:0021955">
    <property type="term" value="P:central nervous system neuron axonogenesis"/>
    <property type="evidence" value="ECO:0000315"/>
    <property type="project" value="MGI"/>
</dbReference>
<dbReference type="GO" id="GO:0060052">
    <property type="term" value="P:neurofilament cytoskeleton organization"/>
    <property type="evidence" value="ECO:0000315"/>
    <property type="project" value="MGI"/>
</dbReference>
<dbReference type="CDD" id="cd20876">
    <property type="entry name" value="C1_p190RhoGEF"/>
    <property type="match status" value="1"/>
</dbReference>
<dbReference type="CDD" id="cd14680">
    <property type="entry name" value="PH_p190RhoGEF"/>
    <property type="match status" value="1"/>
</dbReference>
<dbReference type="CDD" id="cd00160">
    <property type="entry name" value="RhoGEF"/>
    <property type="match status" value="1"/>
</dbReference>
<dbReference type="FunFam" id="1.20.900.10:FF:000004">
    <property type="entry name" value="Rho guanine nucleotide exchange factor 2"/>
    <property type="match status" value="1"/>
</dbReference>
<dbReference type="FunFam" id="2.30.29.30:FF:000021">
    <property type="entry name" value="Rho guanine nucleotide exchange factor 2"/>
    <property type="match status" value="1"/>
</dbReference>
<dbReference type="FunFam" id="3.30.60.20:FF:000050">
    <property type="entry name" value="Rho guanine nucleotide exchange factor 28"/>
    <property type="match status" value="1"/>
</dbReference>
<dbReference type="Gene3D" id="3.30.60.20">
    <property type="match status" value="1"/>
</dbReference>
<dbReference type="Gene3D" id="1.20.900.10">
    <property type="entry name" value="Dbl homology (DH) domain"/>
    <property type="match status" value="1"/>
</dbReference>
<dbReference type="Gene3D" id="2.30.29.30">
    <property type="entry name" value="Pleckstrin-homology domain (PH domain)/Phosphotyrosine-binding domain (PTB)"/>
    <property type="match status" value="1"/>
</dbReference>
<dbReference type="InterPro" id="IPR037819">
    <property type="entry name" value="ARHGEF28_PH"/>
</dbReference>
<dbReference type="InterPro" id="IPR046349">
    <property type="entry name" value="C1-like_sf"/>
</dbReference>
<dbReference type="InterPro" id="IPR035899">
    <property type="entry name" value="DBL_dom_sf"/>
</dbReference>
<dbReference type="InterPro" id="IPR000219">
    <property type="entry name" value="DH_dom"/>
</dbReference>
<dbReference type="InterPro" id="IPR002219">
    <property type="entry name" value="PE/DAG-bd"/>
</dbReference>
<dbReference type="InterPro" id="IPR011993">
    <property type="entry name" value="PH-like_dom_sf"/>
</dbReference>
<dbReference type="InterPro" id="IPR041020">
    <property type="entry name" value="PH_16"/>
</dbReference>
<dbReference type="InterPro" id="IPR001849">
    <property type="entry name" value="PH_domain"/>
</dbReference>
<dbReference type="InterPro" id="IPR051632">
    <property type="entry name" value="Rho_GEF"/>
</dbReference>
<dbReference type="PANTHER" id="PTHR13944">
    <property type="entry name" value="AGAP007712-PA"/>
    <property type="match status" value="1"/>
</dbReference>
<dbReference type="PANTHER" id="PTHR13944:SF22">
    <property type="entry name" value="RHO GUANINE NUCLEOTIDE EXCHANGE FACTOR 28"/>
    <property type="match status" value="1"/>
</dbReference>
<dbReference type="Pfam" id="PF00130">
    <property type="entry name" value="C1_1"/>
    <property type="match status" value="1"/>
</dbReference>
<dbReference type="Pfam" id="PF17838">
    <property type="entry name" value="PH_16"/>
    <property type="match status" value="1"/>
</dbReference>
<dbReference type="Pfam" id="PF00621">
    <property type="entry name" value="RhoGEF"/>
    <property type="match status" value="1"/>
</dbReference>
<dbReference type="SMART" id="SM00109">
    <property type="entry name" value="C1"/>
    <property type="match status" value="1"/>
</dbReference>
<dbReference type="SMART" id="SM00233">
    <property type="entry name" value="PH"/>
    <property type="match status" value="1"/>
</dbReference>
<dbReference type="SMART" id="SM00325">
    <property type="entry name" value="RhoGEF"/>
    <property type="match status" value="1"/>
</dbReference>
<dbReference type="SUPFAM" id="SSF57889">
    <property type="entry name" value="Cysteine-rich domain"/>
    <property type="match status" value="1"/>
</dbReference>
<dbReference type="SUPFAM" id="SSF48065">
    <property type="entry name" value="DBL homology domain (DH-domain)"/>
    <property type="match status" value="1"/>
</dbReference>
<dbReference type="SUPFAM" id="SSF50729">
    <property type="entry name" value="PH domain-like"/>
    <property type="match status" value="1"/>
</dbReference>
<dbReference type="PROSITE" id="PS50010">
    <property type="entry name" value="DH_2"/>
    <property type="match status" value="1"/>
</dbReference>
<dbReference type="PROSITE" id="PS50003">
    <property type="entry name" value="PH_DOMAIN"/>
    <property type="match status" value="1"/>
</dbReference>
<dbReference type="PROSITE" id="PS00479">
    <property type="entry name" value="ZF_DAG_PE_1"/>
    <property type="match status" value="1"/>
</dbReference>
<dbReference type="PROSITE" id="PS50081">
    <property type="entry name" value="ZF_DAG_PE_2"/>
    <property type="match status" value="1"/>
</dbReference>
<reference key="1">
    <citation type="journal article" date="1997" name="J. Cell Biol.">
        <title>Identification of a novel, putative Rho-specific GDP/GTP exchange factor and a RhoA-binding protein: control of neuronal morphology.</title>
        <authorList>
            <person name="Gebbink M.F.B.G."/>
            <person name="Kranenburg O."/>
            <person name="Poland M."/>
            <person name="van Horck F.P.G."/>
            <person name="Houssa B."/>
            <person name="Moolenaar W.H."/>
        </authorList>
    </citation>
    <scope>NUCLEOTIDE SEQUENCE [MRNA] (ISOFORM 1)</scope>
    <scope>FUNCTION</scope>
    <scope>TISSUE SPECIFICITY</scope>
    <source>
        <tissue>Brain</tissue>
    </source>
</reference>
<reference key="2">
    <citation type="journal article" date="2004" name="DNA Res.">
        <title>Prediction of the coding sequences of mouse homologues of KIAA gene: IV. The complete nucleotide sequences of 500 mouse KIAA-homologous cDNAs identified by screening of terminal sequences of cDNA clones randomly sampled from size-fractionated libraries.</title>
        <authorList>
            <person name="Okazaki N."/>
            <person name="Kikuno R."/>
            <person name="Ohara R."/>
            <person name="Inamoto S."/>
            <person name="Koseki H."/>
            <person name="Hiraoka S."/>
            <person name="Saga Y."/>
            <person name="Seino S."/>
            <person name="Nishimura M."/>
            <person name="Kaisho T."/>
            <person name="Hoshino K."/>
            <person name="Kitamura H."/>
            <person name="Nagase T."/>
            <person name="Ohara O."/>
            <person name="Koga H."/>
        </authorList>
    </citation>
    <scope>NUCLEOTIDE SEQUENCE [LARGE SCALE MRNA] (ISOFORM 2)</scope>
    <source>
        <tissue>Brain</tissue>
    </source>
</reference>
<reference evidence="23" key="3">
    <citation type="journal article" date="2009" name="PLoS Biol.">
        <title>Lineage-specific biology revealed by a finished genome assembly of the mouse.</title>
        <authorList>
            <person name="Church D.M."/>
            <person name="Goodstadt L."/>
            <person name="Hillier L.W."/>
            <person name="Zody M.C."/>
            <person name="Goldstein S."/>
            <person name="She X."/>
            <person name="Bult C.J."/>
            <person name="Agarwala R."/>
            <person name="Cherry J.L."/>
            <person name="DiCuccio M."/>
            <person name="Hlavina W."/>
            <person name="Kapustin Y."/>
            <person name="Meric P."/>
            <person name="Maglott D."/>
            <person name="Birtle Z."/>
            <person name="Marques A.C."/>
            <person name="Graves T."/>
            <person name="Zhou S."/>
            <person name="Teague B."/>
            <person name="Potamousis K."/>
            <person name="Churas C."/>
            <person name="Place M."/>
            <person name="Herschleb J."/>
            <person name="Runnheim R."/>
            <person name="Forrest D."/>
            <person name="Amos-Landgraf J."/>
            <person name="Schwartz D.C."/>
            <person name="Cheng Z."/>
            <person name="Lindblad-Toh K."/>
            <person name="Eichler E.E."/>
            <person name="Ponting C.P."/>
        </authorList>
    </citation>
    <scope>NUCLEOTIDE SEQUENCE [LARGE SCALE GENOMIC DNA]</scope>
    <source>
        <strain evidence="23">C57BL/6J</strain>
    </source>
</reference>
<reference key="4">
    <citation type="journal article" date="2004" name="Genome Res.">
        <title>The status, quality, and expansion of the NIH full-length cDNA project: the Mammalian Gene Collection (MGC).</title>
        <authorList>
            <consortium name="The MGC Project Team"/>
        </authorList>
    </citation>
    <scope>NUCLEOTIDE SEQUENCE [LARGE SCALE MRNA] (ISOFORM 1)</scope>
    <source>
        <strain>FVB/N-3</strain>
        <tissue>Bone</tissue>
        <tissue>Brain</tissue>
        <tissue>Mammary tumor</tissue>
    </source>
</reference>
<reference key="5">
    <citation type="journal article" date="1999" name="J. Biol. Chem.">
        <title>Interaction of c-Jun amino-terminal kinase interacting protein-1 with p190 rhoGEF and its localization in differentiated neurons.</title>
        <authorList>
            <person name="Meyer D."/>
            <person name="Liu A."/>
            <person name="Margolis B."/>
        </authorList>
    </citation>
    <scope>INTERACTION WITH MAPK8IP1</scope>
    <scope>MUTAGENESIS OF PHE-1563; ASN-1565 AND PHE-1568</scope>
</reference>
<reference key="6">
    <citation type="journal article" date="2001" name="J. Biol. Chem.">
        <title>Characterization of p190RhoGEF, a RhoA-specific guanine nucleotide exchange factor that interacts with microtubules.</title>
        <authorList>
            <person name="van Horck F.P.G."/>
            <person name="Ahmadian M.R."/>
            <person name="Haeusler L.C."/>
            <person name="Moolenaar W.H."/>
            <person name="Kranenburg O."/>
        </authorList>
    </citation>
    <scope>FUNCTION</scope>
    <scope>INTERACTION WITH RHOA AND MICROTUBULES</scope>
    <scope>MUTAGENESIS OF TYR-1003</scope>
    <scope>SUBCELLULAR LOCATION</scope>
</reference>
<reference key="7">
    <citation type="journal article" date="2001" name="J. Biol. Chem.">
        <title>p190RhoGEF Binds to a destabilizing element in the 3' untranslated region of light neurofilament subunit mRNA and alters the stability of the transcript.</title>
        <authorList>
            <person name="Canete-Soler R."/>
            <person name="Wu J."/>
            <person name="Zhai J."/>
            <person name="Shamim M."/>
            <person name="Schlaepfer W.W."/>
        </authorList>
    </citation>
    <scope>FUNCTION IN NEFL EXPRESSION</scope>
    <scope>NEFL RNA-BINDING</scope>
</reference>
<reference key="8">
    <citation type="journal article" date="2001" name="J. Biol. Chem.">
        <title>Identification of a novel interaction of 14-3-3 with p190RhoGEF.</title>
        <authorList>
            <person name="Zhai J."/>
            <person name="Lin H."/>
            <person name="Shamim M."/>
            <person name="Schlaepfer W.W."/>
            <person name="Canete-Soler R."/>
        </authorList>
    </citation>
    <scope>INTERACTION WITH YWHAE AND YWHAH</scope>
    <scope>MUTAGENESIS OF ASN-1375 AND LEU-1376</scope>
</reference>
<reference key="9">
    <citation type="journal article" date="2003" name="Brain Res. Mol. Brain Res.">
        <title>Cytoplasmic retention sites in p190RhoGEF confer anti-apoptotic activity to an EGFP-tagged protein.</title>
        <authorList>
            <person name="Wu J."/>
            <person name="Zhai J."/>
            <person name="Lin H."/>
            <person name="Nie Z."/>
            <person name="Ge W.-W."/>
            <person name="Garcia-Bermejo L."/>
            <person name="Muschel R.J."/>
            <person name="Schlaepfer W.W."/>
            <person name="Canete-Soler R."/>
        </authorList>
    </citation>
    <scope>FUNCTION</scope>
    <scope>OLIGOMERIZATION</scope>
    <scope>IDENTIFICATION IN A COMPLEX WITH MAPK8 AND MAPK8IP1</scope>
</reference>
<reference key="10">
    <citation type="journal article" date="2003" name="J. Biol. Chem.">
        <title>Direct interaction of focal adhesion kinase with p190RhoGEF.</title>
        <authorList>
            <person name="Zhai J."/>
            <person name="Lin H."/>
            <person name="Nie Z."/>
            <person name="Wu J."/>
            <person name="Canete-Soler R."/>
            <person name="Schlaepfer W.W."/>
            <person name="Schlaepfer D.D."/>
        </authorList>
    </citation>
    <scope>FUNCTION</scope>
    <scope>INTERACTION WITH PTK2/FAK1</scope>
    <scope>PHOSPHORYLATION</scope>
    <scope>TISSUE SPECIFICITY</scope>
</reference>
<reference key="11">
    <citation type="journal article" date="2003" name="J. Immunol.">
        <title>Induced expression of a RhoA-specific guanine nucleotide exchange factor, p190RhoGEF, following CD40 stimulation and WEHI 231 B cell activation.</title>
        <authorList>
            <person name="Lee J.R."/>
            <person name="Ha Y.J."/>
            <person name="Kim H.J."/>
        </authorList>
    </citation>
    <scope>IDENTIFICATION BY MASS SPECTROMETRY</scope>
    <scope>FUNCTION</scope>
    <scope>SUBCELLULAR LOCATION</scope>
    <scope>INDUCTION</scope>
</reference>
<reference key="12">
    <citation type="journal article" date="2004" name="Nat. Neurosci.">
        <title>Control of axonal branching and synapse formation by focal adhesion kinase.</title>
        <authorList>
            <person name="Rico B."/>
            <person name="Beggs H.E."/>
            <person name="Schahin-Reed D."/>
            <person name="Kimes N."/>
            <person name="Schmidt A."/>
            <person name="Reichardt L.F."/>
        </authorList>
    </citation>
    <scope>FUNCTION IN AXONAL BRANCHING AND SYNAPSE FORMATION</scope>
</reference>
<reference key="13">
    <citation type="journal article" date="2005" name="Hum. Mol. Genet.">
        <title>RNA-binding protein is involved in aggregation of light neurofilament protein and is implicated in the pathogenesis of motor neuron degeneration.</title>
        <authorList>
            <person name="Lin H."/>
            <person name="Zhai J."/>
            <person name="Schlaepfer W.W."/>
        </authorList>
    </citation>
    <scope>FUNCTION</scope>
    <scope>INTERACTION WITH NEFL</scope>
</reference>
<reference key="14">
    <citation type="journal article" date="2008" name="J. Biol. Chem.">
        <title>Delta-catenin-induced dendritic morphogenesis. An essential role of p190RhoGEF interaction through Akt1-mediated phosphorylation.</title>
        <authorList>
            <person name="Kim H."/>
            <person name="Han J.-R."/>
            <person name="Park J."/>
            <person name="Oh M."/>
            <person name="James S.E."/>
            <person name="Chang S."/>
            <person name="Lu Q."/>
            <person name="Lee K.Y."/>
            <person name="Ki H."/>
            <person name="Song W.-J."/>
            <person name="Kim K."/>
        </authorList>
    </citation>
    <scope>FUNCTION</scope>
    <scope>INTERACTION WITH CTNND2</scope>
</reference>
<reference key="15">
    <citation type="journal article" date="2008" name="J. Cell Biol.">
        <title>PyK2 and FAK connections to p190Rho guanine nucleotide exchange factor regulate RhoA activity, focal adhesion formation, and cell motility.</title>
        <authorList>
            <person name="Lim Y."/>
            <person name="Lim S.-T."/>
            <person name="Tomar A."/>
            <person name="Gardel M."/>
            <person name="Bernard-Trifilo J.A."/>
            <person name="Chen X.L."/>
            <person name="Uryu S.A."/>
            <person name="Canete-Soler R."/>
            <person name="Zhai J."/>
            <person name="Lin H."/>
            <person name="Schlaepfer W.W."/>
            <person name="Nalbant P."/>
            <person name="Bokoch G."/>
            <person name="Ilic D."/>
            <person name="Waterman-Storer C."/>
            <person name="Schlaepfer D.D."/>
        </authorList>
    </citation>
    <scope>FUNCTION</scope>
    <scope>INDUCTION BY PTK2B/PYK2</scope>
</reference>
<reference key="16">
    <citation type="journal article" date="2010" name="Cell">
        <title>A tissue-specific atlas of mouse protein phosphorylation and expression.</title>
        <authorList>
            <person name="Huttlin E.L."/>
            <person name="Jedrychowski M.P."/>
            <person name="Elias J.E."/>
            <person name="Goswami T."/>
            <person name="Rad R."/>
            <person name="Beausoleil S.A."/>
            <person name="Villen J."/>
            <person name="Haas W."/>
            <person name="Sowa M.E."/>
            <person name="Gygi S.P."/>
        </authorList>
    </citation>
    <scope>PHOSPHORYLATION [LARGE SCALE ANALYSIS] AT SER-1604</scope>
    <scope>IDENTIFICATION BY MASS SPECTROMETRY [LARGE SCALE ANALYSIS]</scope>
    <source>
        <tissue>Kidney</tissue>
        <tissue>Lung</tissue>
        <tissue>Pancreas</tissue>
    </source>
</reference>
<sequence length="1700" mass="190489">MELSCSEVPLYGQKTVYAKFGKNVYLPEDAEFYFVYGGSHQRHVVIADRVQDNVLQSSIPGHWLQETVTVSVCLCSEGYSPVTMGSGSVTYVDNMACRLARLLVTQADRLTACSHQTLLTPFALTVEALPALDEELVLALTQLELPLGWTVLGNSSLEVSLHRESLLHLAVRWALPKLFHFLLCLPGGVKALKLPNEEATTPLDLALQGGHSTLVEDITNFQGSHSPGFSRLRLNEEATLQFVHSSETLTLTVNHTAEHLLEADIKLFRKYFWDRAFLVKALEQEAKTEKATMPSGAAETEEEVRNLESGRSPSEEEEDAKSIKSQVDGPSEHEDQDRLPLDRSFDGLKKSKHVPASLAAGQLSDVLNGGDEVYANCMVIDQVGDLDINYINLEGLSTHTSPESGRSMLGPQACMHTLPPDTSPCGRPLIENSEGTLDAAASQSFVTPSSSRTSNLNLSFGLHGFEKEQSHLKKRSSSLDALVADSEGEGGSEPPICYAVGSQSSPRTGLPSGDELDSFETNTEPDCNISRTESLSLSSTLHSKESLLSGIRSRSYSCSSPKISSGKSRLVRDFTVCSTSEEQRSYSFQEPPGEKRIQEEEWDEYVIPAKSESEKYKVSRTFSFLMNRMTSPRNKSKMKNKDTKEKEKMNRHQFVPGTFSGVLQCSGCDKTLLGKESLQCANCKANTHKGCKDAVPPCTKKFQEKYNKNKPQSILGSSSVRDVPAPGLSLHPSSSMPIGLPAGRKEFAAQVHPLSRSVPGTTLESFRRAVTSLESEGDSWRSRSHSDELFQSMGSSPSTESFMMEDVVDSSLWIDLSSDAQEFEAESWSLVVDPSFCSRQEKDVIKRQDVIFELMQTEVHHIQTLLIMSEVFRKGMKEELQLDHSTVDKIFPCLDELLETHRHFFFSMKERRQESCAGSDRNFVINQIGDILVQQFSEENASKMKRIYGEFCSHHKEAMSLFKELQQNKKFQNFIKIRNSNLLARRRGIPECILLVTQRITKYPVLVERILQYTKERTEEHRDLCKALGLIKDMIAAVDLKVSEYEKNQKWLEILNKIENKTYTKLKNGHVFRKQALLSQERALLHDGLVYWKTATGRFKDILALLLTDVLLFLQEKDQKYIFAAVDQKPSVISLQKLIAREVANEERGMFLISASSAGPEMYEIHTNSKEERNNWMRRIQQAVESCPEEEGGRTSESDEERRKAEARVAKIQQCQEILSNQDQQICTYLEEKLHIYAELGELSGFEDVHLEPHLLIKPDPGEPPQAASLLAAALREAESLQVAVKASKMGDVSQSSEESPGGTVLMDTPSTQDVPASPTASLVTEGTEGRGCWDVDPGLQGVVTDLAVSDAGEKVEYRSFSGSSQSEIIQAIQNLTRLLYSLQAALTIQDSHIEIHKLVLQQRESLAPSHSFRGGPLQDQEKSRYLEKQREELANIHKLQHQFQQEQRRWHRTCDQQQREQEAQESWLQARERECQSQEELLLRHRSELDHQLQEYQQSLERLREGQRMVERERQKMRVQQGLLGHCKHSRQRSLPAVFSPGSKEVTELNRAESLCHENSFFINEAFGHMSLNTSNKPNPSGVPWDAHPLEGSHFDLARTSESPTELKIDISQPPDVNSELWTTGPGHQRPALQENSKESYKNVADLDSFQSESSSPQDSNQRGPQPQTLTTEAKLSLPMAAGHGGDAGDGAEENILYL</sequence>
<keyword id="KW-0025">Alternative splicing</keyword>
<keyword id="KW-1003">Cell membrane</keyword>
<keyword id="KW-0175">Coiled coil</keyword>
<keyword id="KW-0963">Cytoplasm</keyword>
<keyword id="KW-0221">Differentiation</keyword>
<keyword id="KW-0344">Guanine-nucleotide releasing factor</keyword>
<keyword id="KW-0472">Membrane</keyword>
<keyword id="KW-0479">Metal-binding</keyword>
<keyword id="KW-0597">Phosphoprotein</keyword>
<keyword id="KW-1185">Reference proteome</keyword>
<keyword id="KW-0694">RNA-binding</keyword>
<keyword id="KW-0862">Zinc</keyword>
<keyword id="KW-0863">Zinc-finger</keyword>
<protein>
    <recommendedName>
        <fullName>Rho guanine nucleotide exchange factor 28</fullName>
    </recommendedName>
    <alternativeName>
        <fullName>190 kDa guanine nucleotide exchange factor</fullName>
        <shortName>p190-RhoGEF</shortName>
        <shortName>p190RhoGEF</shortName>
    </alternativeName>
    <alternativeName>
        <fullName>Rho guanine nucleotide exchange factor</fullName>
    </alternativeName>
    <alternativeName>
        <fullName>Rho-interacting protein 2</fullName>
    </alternativeName>
</protein>
<proteinExistence type="evidence at protein level"/>
<comment type="function">
    <text evidence="10 11 13 14 15 16 17 18 19 20">Functions as a RHOA-specific guanine nucleotide exchange factor regulating signaling pathways downstream of integrins and growth factor receptors. Functions in axonal branching, synapse formation and dendritic morphogenesis. Also functions in focal adhesion formation, cell motility and B-lymphocytes activation. May regulate NEFL expression and aggregation and play a role in apoptosis.</text>
</comment>
<comment type="subunit">
    <text evidence="9 10 12 14 15 17 18">Homooligomer; forms some cytoplasmic aggregates. Forms a complex with MAPK8 and MAPK8IP1. Interacts with RHOA. Interacts with microtubules. Interacts with YWHAE and YWHAH. Interacts with PTK2/FAK1. Interacts with NEFL. Interacts with CTNND2; prevents interaction with RHOA.</text>
</comment>
<comment type="subcellular location">
    <subcellularLocation>
        <location>Cytoplasm</location>
    </subcellularLocation>
    <subcellularLocation>
        <location>Cell membrane</location>
    </subcellularLocation>
    <text>Colocalizes with the microtubule radial and cortical systems.</text>
</comment>
<comment type="alternative products">
    <event type="alternative splicing"/>
    <isoform>
        <id>P97433-1</id>
        <name>1</name>
        <sequence type="displayed"/>
    </isoform>
    <isoform>
        <id>P97433-2</id>
        <name>2</name>
        <sequence type="described" ref="VSP_032145 VSP_032146"/>
    </isoform>
</comment>
<comment type="tissue specificity">
    <text evidence="14 20">Highly enriched in the brain (at protein level). Also detected in lung and kidney.</text>
</comment>
<comment type="induction">
    <text evidence="13 19">Up-regulated in B-lymphocytes upon CD40 stimulation. Up-regulated by PTK2B/PYK2 (at protein level).</text>
</comment>
<comment type="PTM">
    <text evidence="14">Phosphorylated on tyrosine upon stimulation of cells by laminin.</text>
</comment>
<comment type="sequence caution" evidence="22">
    <conflict type="frameshift">
        <sequence resource="EMBL-CDS" id="AAB18197"/>
    </conflict>
</comment>
<comment type="sequence caution" evidence="22">
    <conflict type="miscellaneous discrepancy">
        <sequence resource="EMBL-CDS" id="AAH22978"/>
    </conflict>
    <text>Contaminating sequence. Potential poly-A sequence.</text>
</comment>
<comment type="sequence caution" evidence="22">
    <conflict type="miscellaneous discrepancy">
        <sequence resource="EMBL-CDS" id="AAH75734"/>
    </conflict>
    <text>Contaminating sequence. Potential poly-A sequence.</text>
</comment>
<comment type="sequence caution" evidence="22">
    <conflict type="erroneous initiation">
        <sequence resource="EMBL-CDS" id="BAD32603"/>
    </conflict>
    <text>Extended N-terminus.</text>
</comment>